<gene>
    <name type="primary">bphB</name>
    <name type="ordered locus">Bxeno_C1126</name>
    <name type="ORF">Bxe_C1192</name>
</gene>
<feature type="chain" id="PRO_0000054531" description="Cis-2,3-dihydrobiphenyl-2,3-diol dehydrogenase">
    <location>
        <begin position="1"/>
        <end position="277"/>
    </location>
</feature>
<feature type="active site" description="Proton acceptor">
    <location>
        <position position="155"/>
    </location>
</feature>
<feature type="binding site" evidence="2">
    <location>
        <begin position="9"/>
        <end position="36"/>
    </location>
    <ligand>
        <name>NAD(+)</name>
        <dbReference type="ChEBI" id="CHEBI:57540"/>
    </ligand>
</feature>
<feature type="binding site" evidence="2">
    <location>
        <position position="59"/>
    </location>
    <ligand>
        <name>NAD(+)</name>
        <dbReference type="ChEBI" id="CHEBI:57540"/>
    </ligand>
</feature>
<feature type="binding site" evidence="1">
    <location>
        <position position="142"/>
    </location>
    <ligand>
        <name>substrate</name>
    </ligand>
</feature>
<feature type="binding site" evidence="2">
    <location>
        <position position="159"/>
    </location>
    <ligand>
        <name>NAD(+)</name>
        <dbReference type="ChEBI" id="CHEBI:57540"/>
    </ligand>
</feature>
<feature type="turn" evidence="4">
    <location>
        <begin position="2"/>
        <end position="5"/>
    </location>
</feature>
<feature type="strand" evidence="4">
    <location>
        <begin position="7"/>
        <end position="11"/>
    </location>
</feature>
<feature type="turn" evidence="4">
    <location>
        <begin position="12"/>
        <end position="14"/>
    </location>
</feature>
<feature type="helix" evidence="4">
    <location>
        <begin position="16"/>
        <end position="27"/>
    </location>
</feature>
<feature type="strand" evidence="4">
    <location>
        <begin position="31"/>
        <end position="37"/>
    </location>
</feature>
<feature type="helix" evidence="4">
    <location>
        <begin position="39"/>
        <end position="49"/>
    </location>
</feature>
<feature type="helix" evidence="4">
    <location>
        <begin position="50"/>
        <end position="52"/>
    </location>
</feature>
<feature type="strand" evidence="4">
    <location>
        <begin position="53"/>
        <end position="57"/>
    </location>
</feature>
<feature type="helix" evidence="4">
    <location>
        <begin position="63"/>
        <end position="77"/>
    </location>
</feature>
<feature type="strand" evidence="4">
    <location>
        <begin position="82"/>
        <end position="84"/>
    </location>
</feature>
<feature type="helix" evidence="4">
    <location>
        <begin position="96"/>
        <end position="98"/>
    </location>
</feature>
<feature type="turn" evidence="4">
    <location>
        <begin position="101"/>
        <end position="103"/>
    </location>
</feature>
<feature type="helix" evidence="4">
    <location>
        <begin position="104"/>
        <end position="115"/>
    </location>
</feature>
<feature type="helix" evidence="4">
    <location>
        <begin position="117"/>
        <end position="133"/>
    </location>
</feature>
<feature type="strand" evidence="4">
    <location>
        <begin position="136"/>
        <end position="140"/>
    </location>
</feature>
<feature type="helix" evidence="4">
    <location>
        <begin position="143"/>
        <end position="145"/>
    </location>
</feature>
<feature type="helix" evidence="4">
    <location>
        <begin position="153"/>
        <end position="173"/>
    </location>
</feature>
<feature type="turn" evidence="4">
    <location>
        <begin position="174"/>
        <end position="176"/>
    </location>
</feature>
<feature type="strand" evidence="4">
    <location>
        <begin position="178"/>
        <end position="184"/>
    </location>
</feature>
<feature type="helix" evidence="4">
    <location>
        <begin position="195"/>
        <end position="197"/>
    </location>
</feature>
<feature type="helix" evidence="4">
    <location>
        <begin position="209"/>
        <end position="213"/>
    </location>
</feature>
<feature type="turn" evidence="4">
    <location>
        <begin position="214"/>
        <end position="216"/>
    </location>
</feature>
<feature type="helix" evidence="4">
    <location>
        <begin position="225"/>
        <end position="228"/>
    </location>
</feature>
<feature type="helix" evidence="4">
    <location>
        <begin position="230"/>
        <end position="236"/>
    </location>
</feature>
<feature type="helix" evidence="4">
    <location>
        <begin position="238"/>
        <end position="241"/>
    </location>
</feature>
<feature type="strand" evidence="4">
    <location>
        <begin position="248"/>
        <end position="254"/>
    </location>
</feature>
<feature type="helix" evidence="4">
    <location>
        <begin position="255"/>
        <end position="257"/>
    </location>
</feature>
<feature type="helix" evidence="4">
    <location>
        <begin position="269"/>
        <end position="273"/>
    </location>
</feature>
<dbReference type="EC" id="1.3.1.56"/>
<dbReference type="EMBL" id="X66122">
    <property type="protein sequence ID" value="CAA46909.1"/>
    <property type="molecule type" value="Genomic_DNA"/>
</dbReference>
<dbReference type="EMBL" id="CP000272">
    <property type="protein sequence ID" value="ABE37054.1"/>
    <property type="molecule type" value="Genomic_DNA"/>
</dbReference>
<dbReference type="EMBL" id="M86348">
    <property type="protein sequence ID" value="AAB63430.2"/>
    <property type="molecule type" value="Genomic_DNA"/>
</dbReference>
<dbReference type="PIR" id="JN0814">
    <property type="entry name" value="JN0814"/>
</dbReference>
<dbReference type="RefSeq" id="WP_011494296.1">
    <property type="nucleotide sequence ID" value="NZ_CP008761.1"/>
</dbReference>
<dbReference type="PDB" id="1BDB">
    <property type="method" value="X-ray"/>
    <property type="resolution" value="2.00 A"/>
    <property type="chains" value="A=1-277"/>
</dbReference>
<dbReference type="PDBsum" id="1BDB"/>
<dbReference type="SMR" id="P47227"/>
<dbReference type="STRING" id="266265.Bxe_C1192"/>
<dbReference type="KEGG" id="bxb:DR64_8613"/>
<dbReference type="KEGG" id="bxe:Bxe_C1192"/>
<dbReference type="eggNOG" id="COG1028">
    <property type="taxonomic scope" value="Bacteria"/>
</dbReference>
<dbReference type="OrthoDB" id="9809287at2"/>
<dbReference type="BRENDA" id="1.3.1.56">
    <property type="organism ID" value="5085"/>
</dbReference>
<dbReference type="UniPathway" id="UPA00155">
    <property type="reaction ID" value="UER00251"/>
</dbReference>
<dbReference type="EvolutionaryTrace" id="P47227"/>
<dbReference type="Proteomes" id="UP000001817">
    <property type="component" value="Chromosome 3"/>
</dbReference>
<dbReference type="GO" id="GO:0018509">
    <property type="term" value="F:cis-2,3-dihydrobiphenyl-2,3-diol dehydrogenase activity"/>
    <property type="evidence" value="ECO:0007669"/>
    <property type="project" value="UniProtKB-EC"/>
</dbReference>
<dbReference type="GO" id="GO:0050664">
    <property type="term" value="F:oxidoreductase activity, acting on NAD(P)H, oxygen as acceptor"/>
    <property type="evidence" value="ECO:0007669"/>
    <property type="project" value="TreeGrafter"/>
</dbReference>
<dbReference type="GO" id="GO:0009056">
    <property type="term" value="P:catabolic process"/>
    <property type="evidence" value="ECO:0007669"/>
    <property type="project" value="UniProtKB-KW"/>
</dbReference>
<dbReference type="CDD" id="cd05348">
    <property type="entry name" value="BphB-like_SDR_c"/>
    <property type="match status" value="1"/>
</dbReference>
<dbReference type="FunFam" id="3.40.50.720:FF:000084">
    <property type="entry name" value="Short-chain dehydrogenase reductase"/>
    <property type="match status" value="1"/>
</dbReference>
<dbReference type="Gene3D" id="3.40.50.720">
    <property type="entry name" value="NAD(P)-binding Rossmann-like Domain"/>
    <property type="match status" value="1"/>
</dbReference>
<dbReference type="InterPro" id="IPR047950">
    <property type="entry name" value="BphB-like_SDR"/>
</dbReference>
<dbReference type="InterPro" id="IPR017711">
    <property type="entry name" value="BphB_TodD"/>
</dbReference>
<dbReference type="InterPro" id="IPR036291">
    <property type="entry name" value="NAD(P)-bd_dom_sf"/>
</dbReference>
<dbReference type="InterPro" id="IPR020904">
    <property type="entry name" value="Sc_DH/Rdtase_CS"/>
</dbReference>
<dbReference type="InterPro" id="IPR002347">
    <property type="entry name" value="SDR_fam"/>
</dbReference>
<dbReference type="NCBIfam" id="TIGR03325">
    <property type="entry name" value="BphB_TodD"/>
    <property type="match status" value="1"/>
</dbReference>
<dbReference type="NCBIfam" id="NF004849">
    <property type="entry name" value="PRK06200.1"/>
    <property type="match status" value="1"/>
</dbReference>
<dbReference type="PANTHER" id="PTHR43008">
    <property type="entry name" value="BENZIL REDUCTASE"/>
    <property type="match status" value="1"/>
</dbReference>
<dbReference type="PANTHER" id="PTHR43008:SF4">
    <property type="entry name" value="CHAIN DEHYDROGENASE, PUTATIVE (AFU_ORTHOLOGUE AFUA_4G08710)-RELATED"/>
    <property type="match status" value="1"/>
</dbReference>
<dbReference type="Pfam" id="PF00106">
    <property type="entry name" value="adh_short"/>
    <property type="match status" value="1"/>
</dbReference>
<dbReference type="PRINTS" id="PR00081">
    <property type="entry name" value="GDHRDH"/>
</dbReference>
<dbReference type="PRINTS" id="PR00080">
    <property type="entry name" value="SDRFAMILY"/>
</dbReference>
<dbReference type="SUPFAM" id="SSF51735">
    <property type="entry name" value="NAD(P)-binding Rossmann-fold domains"/>
    <property type="match status" value="1"/>
</dbReference>
<dbReference type="PROSITE" id="PS00061">
    <property type="entry name" value="ADH_SHORT"/>
    <property type="match status" value="1"/>
</dbReference>
<proteinExistence type="evidence at protein level"/>
<evidence type="ECO:0000250" key="1"/>
<evidence type="ECO:0000269" key="2">
    <source>
    </source>
</evidence>
<evidence type="ECO:0000305" key="3"/>
<evidence type="ECO:0007829" key="4">
    <source>
        <dbReference type="PDB" id="1BDB"/>
    </source>
</evidence>
<reference key="1">
    <citation type="journal article" date="1993" name="Gene">
        <title>Genetic analysis of a Pseudomonas locus encoding a pathway for biphenyl/polychlorinated biphenyl degradation.</title>
        <authorList>
            <person name="Hofer B."/>
            <person name="Eltis L.D."/>
            <person name="Dowling D.N."/>
            <person name="Timmis K.N."/>
        </authorList>
    </citation>
    <scope>NUCLEOTIDE SEQUENCE [GENOMIC DNA]</scope>
</reference>
<reference key="2">
    <citation type="journal article" date="2006" name="Proc. Natl. Acad. Sci. U.S.A.">
        <title>Burkholderia xenovorans LB400 harbors a multi-replicon, 9.73-Mbp genome shaped for versatility.</title>
        <authorList>
            <person name="Chain P.S.G."/>
            <person name="Denef V.J."/>
            <person name="Konstantinidis K.T."/>
            <person name="Vergez L.M."/>
            <person name="Agullo L."/>
            <person name="Reyes V.L."/>
            <person name="Hauser L."/>
            <person name="Cordova M."/>
            <person name="Gomez L."/>
            <person name="Gonzalez M."/>
            <person name="Land M."/>
            <person name="Lao V."/>
            <person name="Larimer F."/>
            <person name="LiPuma J.J."/>
            <person name="Mahenthiralingam E."/>
            <person name="Malfatti S.A."/>
            <person name="Marx C.J."/>
            <person name="Parnell J.J."/>
            <person name="Ramette A."/>
            <person name="Richardson P."/>
            <person name="Seeger M."/>
            <person name="Smith D."/>
            <person name="Spilker T."/>
            <person name="Sul W.J."/>
            <person name="Tsoi T.V."/>
            <person name="Ulrich L.E."/>
            <person name="Zhulin I.B."/>
            <person name="Tiedje J.M."/>
        </authorList>
    </citation>
    <scope>NUCLEOTIDE SEQUENCE [LARGE SCALE GENOMIC DNA]</scope>
    <source>
        <strain>LB400</strain>
    </source>
</reference>
<reference key="3">
    <citation type="journal article" date="1992" name="J. Bacteriol.">
        <title>Nucleotide sequencing and transcriptional mapping of the genes encoding biphenyl dioxygenase, a multicomponent polychlorinated-biphenyl-degrading enzyme in Pseudomonas strain LB400.</title>
        <authorList>
            <person name="Erickson B.D."/>
            <person name="Mondello F.J."/>
        </authorList>
    </citation>
    <scope>NUCLEOTIDE SEQUENCE [GENOMIC DNA] OF 1-22</scope>
</reference>
<reference key="4">
    <citation type="journal article" date="1998" name="Protein Sci.">
        <title>Crystal structure of cis-biphenyl-2,3-dihydrodiol-2,3-dehydrogenase from a PCB degrader at 2.0-A resolution.</title>
        <authorList>
            <person name="Huelsmeyer M."/>
            <person name="Hecht H.-J."/>
            <person name="Niefind K."/>
            <person name="Hofer B."/>
            <person name="Eltis L.D."/>
            <person name="Timmis K.N."/>
            <person name="Schomburg D."/>
        </authorList>
    </citation>
    <scope>X-RAY CRYSTALLOGRAPHY (2.0 ANGSTROMS) IN COMPLEX WITH NAD</scope>
</reference>
<organism>
    <name type="scientific">Paraburkholderia xenovorans (strain LB400)</name>
    <dbReference type="NCBI Taxonomy" id="266265"/>
    <lineage>
        <taxon>Bacteria</taxon>
        <taxon>Pseudomonadati</taxon>
        <taxon>Pseudomonadota</taxon>
        <taxon>Betaproteobacteria</taxon>
        <taxon>Burkholderiales</taxon>
        <taxon>Burkholderiaceae</taxon>
        <taxon>Paraburkholderia</taxon>
    </lineage>
</organism>
<keyword id="KW-0002">3D-structure</keyword>
<keyword id="KW-0058">Aromatic hydrocarbons catabolism</keyword>
<keyword id="KW-0520">NAD</keyword>
<keyword id="KW-0560">Oxidoreductase</keyword>
<keyword id="KW-1185">Reference proteome</keyword>
<accession>P47227</accession>
<accession>Q13FT5</accession>
<accession>Q52435</accession>
<sequence>MKLKGEAVLITGGASGLGRALVDRFVAEGAKVAVLDKSAERLAELETDHGDNVLGIVGDVRSLEDQKQAASRCVARFGKIDTLIPNAGIWDYSTALVDLPEESLDAAFDEVFHINVKGYIHAVKACLPALVASRGNVIFTISNAGFYPNGGGPLYTAAKHAIVGLVRELAFELAPYVRVNGVGSGGINSDLRGPSSLGMGSKAISTVPLADMLKSVLPIGRMPEVEEYTGAYVFFATRGDAAPATGALLNYDGGLGVRGFFSGAGGNDLLEQLNIHP</sequence>
<protein>
    <recommendedName>
        <fullName>Cis-2,3-dihydrobiphenyl-2,3-diol dehydrogenase</fullName>
        <ecNumber>1.3.1.56</ecNumber>
    </recommendedName>
    <alternativeName>
        <fullName>2,3-dihydro-2,3-dihydroxybiphenyl dehydrogenase</fullName>
    </alternativeName>
    <alternativeName>
        <fullName>2,3-dihydroxy-4-phenylhexa-4,6-diene dehydrogenase</fullName>
    </alternativeName>
    <alternativeName>
        <fullName>Biphenyl-2,3-dihydro-2,3-diol dehydrogenase</fullName>
    </alternativeName>
    <alternativeName>
        <fullName>Biphenyl-cis-diol dehydrogenase</fullName>
    </alternativeName>
</protein>
<comment type="catalytic activity">
    <reaction>
        <text>(2R,3S)-3-phenylcyclohexa-3,5-diene-1,2-diol + NAD(+) = biphenyl-2,3-diol + NADH + H(+)</text>
        <dbReference type="Rhea" id="RHEA:17033"/>
        <dbReference type="ChEBI" id="CHEBI:15378"/>
        <dbReference type="ChEBI" id="CHEBI:16205"/>
        <dbReference type="ChEBI" id="CHEBI:32922"/>
        <dbReference type="ChEBI" id="CHEBI:57540"/>
        <dbReference type="ChEBI" id="CHEBI:57945"/>
        <dbReference type="EC" id="1.3.1.56"/>
    </reaction>
</comment>
<comment type="pathway">
    <text>Xenobiotic degradation; biphenyl degradation; 2-hydroxy-2,4-pentadienoate and benzoate from biphenyl: step 2/4.</text>
</comment>
<comment type="similarity">
    <text evidence="3">Belongs to the short-chain dehydrogenases/reductases (SDR) family.</text>
</comment>
<name>BPHB_PARXL</name>